<organism>
    <name type="scientific">Prochlorococcus marinus (strain NATL2A)</name>
    <dbReference type="NCBI Taxonomy" id="59920"/>
    <lineage>
        <taxon>Bacteria</taxon>
        <taxon>Bacillati</taxon>
        <taxon>Cyanobacteriota</taxon>
        <taxon>Cyanophyceae</taxon>
        <taxon>Synechococcales</taxon>
        <taxon>Prochlorococcaceae</taxon>
        <taxon>Prochlorococcus</taxon>
    </lineage>
</organism>
<accession>Q46HR4</accession>
<gene>
    <name evidence="1" type="primary">aroK</name>
    <name type="ordered locus">PMN2A_1476</name>
</gene>
<keyword id="KW-0028">Amino-acid biosynthesis</keyword>
<keyword id="KW-0057">Aromatic amino acid biosynthesis</keyword>
<keyword id="KW-0067">ATP-binding</keyword>
<keyword id="KW-0963">Cytoplasm</keyword>
<keyword id="KW-0418">Kinase</keyword>
<keyword id="KW-0460">Magnesium</keyword>
<keyword id="KW-0479">Metal-binding</keyword>
<keyword id="KW-0547">Nucleotide-binding</keyword>
<keyword id="KW-1185">Reference proteome</keyword>
<keyword id="KW-0808">Transferase</keyword>
<protein>
    <recommendedName>
        <fullName evidence="1">Shikimate kinase</fullName>
        <shortName evidence="1">SK</shortName>
        <ecNumber evidence="1">2.7.1.71</ecNumber>
    </recommendedName>
</protein>
<comment type="function">
    <text evidence="1">Catalyzes the specific phosphorylation of the 3-hydroxyl group of shikimic acid using ATP as a cosubstrate.</text>
</comment>
<comment type="catalytic activity">
    <reaction evidence="1">
        <text>shikimate + ATP = 3-phosphoshikimate + ADP + H(+)</text>
        <dbReference type="Rhea" id="RHEA:13121"/>
        <dbReference type="ChEBI" id="CHEBI:15378"/>
        <dbReference type="ChEBI" id="CHEBI:30616"/>
        <dbReference type="ChEBI" id="CHEBI:36208"/>
        <dbReference type="ChEBI" id="CHEBI:145989"/>
        <dbReference type="ChEBI" id="CHEBI:456216"/>
        <dbReference type="EC" id="2.7.1.71"/>
    </reaction>
</comment>
<comment type="cofactor">
    <cofactor evidence="1">
        <name>Mg(2+)</name>
        <dbReference type="ChEBI" id="CHEBI:18420"/>
    </cofactor>
    <text evidence="1">Binds 1 Mg(2+) ion per subunit.</text>
</comment>
<comment type="pathway">
    <text evidence="1">Metabolic intermediate biosynthesis; chorismate biosynthesis; chorismate from D-erythrose 4-phosphate and phosphoenolpyruvate: step 5/7.</text>
</comment>
<comment type="subunit">
    <text evidence="1">Monomer.</text>
</comment>
<comment type="subcellular location">
    <subcellularLocation>
        <location evidence="1">Cytoplasm</location>
    </subcellularLocation>
</comment>
<comment type="similarity">
    <text evidence="1">Belongs to the shikimate kinase family.</text>
</comment>
<reference key="1">
    <citation type="journal article" date="2007" name="PLoS Genet.">
        <title>Patterns and implications of gene gain and loss in the evolution of Prochlorococcus.</title>
        <authorList>
            <person name="Kettler G.C."/>
            <person name="Martiny A.C."/>
            <person name="Huang K."/>
            <person name="Zucker J."/>
            <person name="Coleman M.L."/>
            <person name="Rodrigue S."/>
            <person name="Chen F."/>
            <person name="Lapidus A."/>
            <person name="Ferriera S."/>
            <person name="Johnson J."/>
            <person name="Steglich C."/>
            <person name="Church G.M."/>
            <person name="Richardson P."/>
            <person name="Chisholm S.W."/>
        </authorList>
    </citation>
    <scope>NUCLEOTIDE SEQUENCE [LARGE SCALE GENOMIC DNA]</scope>
    <source>
        <strain>NATL2A</strain>
    </source>
</reference>
<proteinExistence type="inferred from homology"/>
<evidence type="ECO:0000255" key="1">
    <source>
        <dbReference type="HAMAP-Rule" id="MF_00109"/>
    </source>
</evidence>
<dbReference type="EC" id="2.7.1.71" evidence="1"/>
<dbReference type="EMBL" id="CP000095">
    <property type="protein sequence ID" value="AAZ58964.1"/>
    <property type="molecule type" value="Genomic_DNA"/>
</dbReference>
<dbReference type="RefSeq" id="WP_011294108.1">
    <property type="nucleotide sequence ID" value="NC_007335.2"/>
</dbReference>
<dbReference type="SMR" id="Q46HR4"/>
<dbReference type="STRING" id="59920.PMN2A_1476"/>
<dbReference type="KEGG" id="pmn:PMN2A_1476"/>
<dbReference type="HOGENOM" id="CLU_057607_2_3_3"/>
<dbReference type="OrthoDB" id="9800332at2"/>
<dbReference type="PhylomeDB" id="Q46HR4"/>
<dbReference type="UniPathway" id="UPA00053">
    <property type="reaction ID" value="UER00088"/>
</dbReference>
<dbReference type="Proteomes" id="UP000002535">
    <property type="component" value="Chromosome"/>
</dbReference>
<dbReference type="GO" id="GO:0005829">
    <property type="term" value="C:cytosol"/>
    <property type="evidence" value="ECO:0007669"/>
    <property type="project" value="TreeGrafter"/>
</dbReference>
<dbReference type="GO" id="GO:0005524">
    <property type="term" value="F:ATP binding"/>
    <property type="evidence" value="ECO:0007669"/>
    <property type="project" value="UniProtKB-UniRule"/>
</dbReference>
<dbReference type="GO" id="GO:0000287">
    <property type="term" value="F:magnesium ion binding"/>
    <property type="evidence" value="ECO:0007669"/>
    <property type="project" value="UniProtKB-UniRule"/>
</dbReference>
<dbReference type="GO" id="GO:0004765">
    <property type="term" value="F:shikimate kinase activity"/>
    <property type="evidence" value="ECO:0007669"/>
    <property type="project" value="UniProtKB-UniRule"/>
</dbReference>
<dbReference type="GO" id="GO:0008652">
    <property type="term" value="P:amino acid biosynthetic process"/>
    <property type="evidence" value="ECO:0007669"/>
    <property type="project" value="UniProtKB-KW"/>
</dbReference>
<dbReference type="GO" id="GO:0009073">
    <property type="term" value="P:aromatic amino acid family biosynthetic process"/>
    <property type="evidence" value="ECO:0007669"/>
    <property type="project" value="UniProtKB-KW"/>
</dbReference>
<dbReference type="GO" id="GO:0009423">
    <property type="term" value="P:chorismate biosynthetic process"/>
    <property type="evidence" value="ECO:0007669"/>
    <property type="project" value="UniProtKB-UniRule"/>
</dbReference>
<dbReference type="CDD" id="cd00464">
    <property type="entry name" value="SK"/>
    <property type="match status" value="1"/>
</dbReference>
<dbReference type="Gene3D" id="3.40.50.300">
    <property type="entry name" value="P-loop containing nucleotide triphosphate hydrolases"/>
    <property type="match status" value="1"/>
</dbReference>
<dbReference type="HAMAP" id="MF_00109">
    <property type="entry name" value="Shikimate_kinase"/>
    <property type="match status" value="1"/>
</dbReference>
<dbReference type="InterPro" id="IPR027417">
    <property type="entry name" value="P-loop_NTPase"/>
</dbReference>
<dbReference type="InterPro" id="IPR031322">
    <property type="entry name" value="Shikimate/glucono_kinase"/>
</dbReference>
<dbReference type="InterPro" id="IPR000623">
    <property type="entry name" value="Shikimate_kinase/TSH1"/>
</dbReference>
<dbReference type="InterPro" id="IPR023000">
    <property type="entry name" value="Shikimate_kinase_CS"/>
</dbReference>
<dbReference type="PANTHER" id="PTHR21087">
    <property type="entry name" value="SHIKIMATE KINASE"/>
    <property type="match status" value="1"/>
</dbReference>
<dbReference type="PANTHER" id="PTHR21087:SF16">
    <property type="entry name" value="SHIKIMATE KINASE 1, CHLOROPLASTIC"/>
    <property type="match status" value="1"/>
</dbReference>
<dbReference type="Pfam" id="PF01202">
    <property type="entry name" value="SKI"/>
    <property type="match status" value="1"/>
</dbReference>
<dbReference type="PRINTS" id="PR01100">
    <property type="entry name" value="SHIKIMTKNASE"/>
</dbReference>
<dbReference type="SUPFAM" id="SSF52540">
    <property type="entry name" value="P-loop containing nucleoside triphosphate hydrolases"/>
    <property type="match status" value="1"/>
</dbReference>
<dbReference type="PROSITE" id="PS01128">
    <property type="entry name" value="SHIKIMATE_KINASE"/>
    <property type="match status" value="1"/>
</dbReference>
<feature type="chain" id="PRO_0000237910" description="Shikimate kinase">
    <location>
        <begin position="1"/>
        <end position="198"/>
    </location>
</feature>
<feature type="binding site" evidence="1">
    <location>
        <begin position="26"/>
        <end position="31"/>
    </location>
    <ligand>
        <name>ATP</name>
        <dbReference type="ChEBI" id="CHEBI:30616"/>
    </ligand>
</feature>
<feature type="binding site" evidence="1">
    <location>
        <position position="30"/>
    </location>
    <ligand>
        <name>Mg(2+)</name>
        <dbReference type="ChEBI" id="CHEBI:18420"/>
    </ligand>
</feature>
<feature type="binding site" evidence="1">
    <location>
        <position position="48"/>
    </location>
    <ligand>
        <name>substrate</name>
    </ligand>
</feature>
<feature type="binding site" evidence="1">
    <location>
        <position position="72"/>
    </location>
    <ligand>
        <name>substrate</name>
    </ligand>
</feature>
<feature type="binding site" evidence="1">
    <location>
        <position position="94"/>
    </location>
    <ligand>
        <name>substrate</name>
    </ligand>
</feature>
<feature type="binding site" evidence="1">
    <location>
        <position position="132"/>
    </location>
    <ligand>
        <name>ATP</name>
        <dbReference type="ChEBI" id="CHEBI:30616"/>
    </ligand>
</feature>
<feature type="binding site" evidence="1">
    <location>
        <position position="151"/>
    </location>
    <ligand>
        <name>substrate</name>
    </ligand>
</feature>
<feature type="binding site" evidence="1">
    <location>
        <position position="167"/>
    </location>
    <ligand>
        <name>ATP</name>
        <dbReference type="ChEBI" id="CHEBI:30616"/>
    </ligand>
</feature>
<sequence>MAVQSTPKTLKEKLGGRNIFLIGMMGSGKSQTGPVLAKMINYAFVDTDDVIEKASKQSISSIFEKDGEKVFRDVEKKVLKEISQHHSLVIATGGGLVTLPENWGILHQGIVIWLDLDLRRSIKRLESDHKRRPLLLGDNLAENFSQIYESRKPIYLESDLRIEVEDQSPYEVATMVAEHLQSILIDQEPQAERHTTEL</sequence>
<name>AROK_PROMT</name>